<organism>
    <name type="scientific">Helicobacter pylori (strain ATCC 700392 / 26695)</name>
    <name type="common">Campylobacter pylori</name>
    <dbReference type="NCBI Taxonomy" id="85962"/>
    <lineage>
        <taxon>Bacteria</taxon>
        <taxon>Pseudomonadati</taxon>
        <taxon>Campylobacterota</taxon>
        <taxon>Epsilonproteobacteria</taxon>
        <taxon>Campylobacterales</taxon>
        <taxon>Helicobacteraceae</taxon>
        <taxon>Helicobacter</taxon>
    </lineage>
</organism>
<evidence type="ECO:0000269" key="1">
    <source>
    </source>
</evidence>
<feature type="chain" id="PRO_0000424563" description="ATP/GTP phosphatase">
    <location>
        <begin position="1"/>
        <end position="370"/>
    </location>
</feature>
<keyword id="KW-0067">ATP-binding</keyword>
<keyword id="KW-0342">GTP-binding</keyword>
<keyword id="KW-0378">Hydrolase</keyword>
<keyword id="KW-0547">Nucleotide-binding</keyword>
<keyword id="KW-1185">Reference proteome</keyword>
<comment type="function">
    <text evidence="1">Has nucleotide phosphatase activity toward ATP and GTP, but not toward CTP, TTP and ADP.</text>
</comment>
<comment type="catalytic activity">
    <reaction evidence="1">
        <text>ATP + H2O = ADP + phosphate + H(+)</text>
        <dbReference type="Rhea" id="RHEA:13065"/>
        <dbReference type="ChEBI" id="CHEBI:15377"/>
        <dbReference type="ChEBI" id="CHEBI:15378"/>
        <dbReference type="ChEBI" id="CHEBI:30616"/>
        <dbReference type="ChEBI" id="CHEBI:43474"/>
        <dbReference type="ChEBI" id="CHEBI:456216"/>
    </reaction>
</comment>
<comment type="catalytic activity">
    <reaction evidence="1">
        <text>GTP + H2O = GDP + phosphate + H(+)</text>
        <dbReference type="Rhea" id="RHEA:19669"/>
        <dbReference type="ChEBI" id="CHEBI:15377"/>
        <dbReference type="ChEBI" id="CHEBI:15378"/>
        <dbReference type="ChEBI" id="CHEBI:37565"/>
        <dbReference type="ChEBI" id="CHEBI:43474"/>
        <dbReference type="ChEBI" id="CHEBI:58189"/>
    </reaction>
</comment>
<comment type="biophysicochemical properties">
    <kinetics>
        <KM evidence="1">1.02 mM for ATP</KM>
        <KM evidence="1">0.58 mM for GTP</KM>
        <text>kcat is 9.3 min(-1) and 0.57 min(-1) with ATP and GTP as substrate, respectively.</text>
    </kinetics>
    <phDependence>
        <text evidence="1">Optimum pH is 6.0.</text>
    </phDependence>
    <temperatureDependence>
        <text evidence="1">Optimum temperature is 45 degrees Celsius.</text>
    </temperatureDependence>
</comment>
<reference key="1">
    <citation type="journal article" date="1997" name="Nature">
        <title>The complete genome sequence of the gastric pathogen Helicobacter pylori.</title>
        <authorList>
            <person name="Tomb J.-F."/>
            <person name="White O."/>
            <person name="Kerlavage A.R."/>
            <person name="Clayton R.A."/>
            <person name="Sutton G.G."/>
            <person name="Fleischmann R.D."/>
            <person name="Ketchum K.A."/>
            <person name="Klenk H.-P."/>
            <person name="Gill S.R."/>
            <person name="Dougherty B.A."/>
            <person name="Nelson K.E."/>
            <person name="Quackenbush J."/>
            <person name="Zhou L."/>
            <person name="Kirkness E.F."/>
            <person name="Peterson S.N."/>
            <person name="Loftus B.J."/>
            <person name="Richardson D.L."/>
            <person name="Dodson R.J."/>
            <person name="Khalak H.G."/>
            <person name="Glodek A."/>
            <person name="McKenney K."/>
            <person name="FitzGerald L.M."/>
            <person name="Lee N."/>
            <person name="Adams M.D."/>
            <person name="Hickey E.K."/>
            <person name="Berg D.E."/>
            <person name="Gocayne J.D."/>
            <person name="Utterback T.R."/>
            <person name="Peterson J.D."/>
            <person name="Kelley J.M."/>
            <person name="Cotton M.D."/>
            <person name="Weidman J.F."/>
            <person name="Fujii C."/>
            <person name="Bowman C."/>
            <person name="Watthey L."/>
            <person name="Wallin E."/>
            <person name="Hayes W.S."/>
            <person name="Borodovsky M."/>
            <person name="Karp P.D."/>
            <person name="Smith H.O."/>
            <person name="Fraser C.M."/>
            <person name="Venter J.C."/>
        </authorList>
    </citation>
    <scope>NUCLEOTIDE SEQUENCE [LARGE SCALE GENOMIC DNA]</scope>
    <source>
        <strain>ATCC 700392 / 26695</strain>
    </source>
</reference>
<reference key="2">
    <citation type="submission" date="2012-10" db="EMBL/GenBank/DDBJ databases">
        <title>Draft genome of Helicobacter pylori.</title>
        <authorList>
            <person name="Manolov A."/>
            <person name="Prihodko E."/>
            <person name="Larin A."/>
            <person name="Karpova I."/>
            <person name="Semashko T."/>
            <person name="Alexeev D."/>
            <person name="Kostrjukova E."/>
            <person name="Govorun V."/>
        </authorList>
    </citation>
    <scope>NUCLEOTIDE SEQUENCE [LARGE SCALE GENOMIC DNA]</scope>
    <source>
        <strain>ATCC 700392 / 26695</strain>
    </source>
</reference>
<reference key="3">
    <citation type="journal article" date="2013" name="PLoS ONE">
        <title>Biochemical characterization of hypothetical proteins from Helicobacter pylori.</title>
        <authorList>
            <person name="Choi H.P."/>
            <person name="Juarez S."/>
            <person name="Ciordia S."/>
            <person name="Fernandez M."/>
            <person name="Bargiela R."/>
            <person name="Albar J.P."/>
            <person name="Mazumdar V."/>
            <person name="Anton B.P."/>
            <person name="Kasif S."/>
            <person name="Ferrer M."/>
            <person name="Steffen M."/>
        </authorList>
    </citation>
    <scope>IDENTIFICATION BY MASS SPECTROMETRY</scope>
    <scope>FUNCTION</scope>
    <scope>CATALYTIC ACTIVITY</scope>
    <scope>SUBSTRATE SPECIFICITY</scope>
    <scope>BIOPHYSICOCHEMICAL PROPERTIES</scope>
    <source>
        <strain>ATCC 700392 / 26695</strain>
    </source>
</reference>
<accession>O25711</accession>
<dbReference type="EC" id="3.6.1.-"/>
<dbReference type="EMBL" id="AE000511">
    <property type="protein sequence ID" value="AAD08125.1"/>
    <property type="molecule type" value="Genomic_DNA"/>
</dbReference>
<dbReference type="EMBL" id="CP003904">
    <property type="protein sequence ID" value="AFV42292.1"/>
    <property type="molecule type" value="Genomic_DNA"/>
</dbReference>
<dbReference type="PIR" id="G64654">
    <property type="entry name" value="G64654"/>
</dbReference>
<dbReference type="RefSeq" id="NP_207870.1">
    <property type="nucleotide sequence ID" value="NC_000915.1"/>
</dbReference>
<dbReference type="RefSeq" id="WP_000616490.1">
    <property type="nucleotide sequence ID" value="NC_018939.1"/>
</dbReference>
<dbReference type="DIP" id="DIP-3250N"/>
<dbReference type="IntAct" id="O25711">
    <property type="interactions" value="1"/>
</dbReference>
<dbReference type="MINT" id="O25711"/>
<dbReference type="STRING" id="85962.HP_1079"/>
<dbReference type="PaxDb" id="85962-C694_05575"/>
<dbReference type="DNASU" id="899615"/>
<dbReference type="EnsemblBacteria" id="AAD08125">
    <property type="protein sequence ID" value="AAD08125"/>
    <property type="gene ID" value="HP_1079"/>
</dbReference>
<dbReference type="KEGG" id="heo:C694_05575"/>
<dbReference type="KEGG" id="hpy:HP_1079"/>
<dbReference type="PATRIC" id="fig|85962.47.peg.1158"/>
<dbReference type="eggNOG" id="COG1106">
    <property type="taxonomic scope" value="Bacteria"/>
</dbReference>
<dbReference type="HOGENOM" id="CLU_063816_0_0_7"/>
<dbReference type="InParanoid" id="O25711"/>
<dbReference type="OrthoDB" id="5329090at2"/>
<dbReference type="PhylomeDB" id="O25711"/>
<dbReference type="SABIO-RK" id="O25711"/>
<dbReference type="Proteomes" id="UP000000429">
    <property type="component" value="Chromosome"/>
</dbReference>
<dbReference type="GO" id="GO:0005524">
    <property type="term" value="F:ATP binding"/>
    <property type="evidence" value="ECO:0007669"/>
    <property type="project" value="UniProtKB-KW"/>
</dbReference>
<dbReference type="GO" id="GO:0016887">
    <property type="term" value="F:ATP hydrolysis activity"/>
    <property type="evidence" value="ECO:0007669"/>
    <property type="project" value="InterPro"/>
</dbReference>
<dbReference type="GO" id="GO:0005525">
    <property type="term" value="F:GTP binding"/>
    <property type="evidence" value="ECO:0007669"/>
    <property type="project" value="UniProtKB-KW"/>
</dbReference>
<dbReference type="GO" id="GO:0003924">
    <property type="term" value="F:GTPase activity"/>
    <property type="evidence" value="ECO:0007669"/>
    <property type="project" value="RHEA"/>
</dbReference>
<dbReference type="Gene3D" id="3.40.50.300">
    <property type="entry name" value="P-loop containing nucleotide triphosphate hydrolases"/>
    <property type="match status" value="1"/>
</dbReference>
<dbReference type="InterPro" id="IPR003959">
    <property type="entry name" value="ATPase_AAA_core"/>
</dbReference>
<dbReference type="InterPro" id="IPR051396">
    <property type="entry name" value="Bact_Antivir_Def_Nuclease"/>
</dbReference>
<dbReference type="InterPro" id="IPR027417">
    <property type="entry name" value="P-loop_NTPase"/>
</dbReference>
<dbReference type="PANTHER" id="PTHR43581">
    <property type="entry name" value="ATP/GTP PHOSPHATASE"/>
    <property type="match status" value="1"/>
</dbReference>
<dbReference type="PANTHER" id="PTHR43581:SF4">
    <property type="entry name" value="ATP_GTP PHOSPHATASE"/>
    <property type="match status" value="1"/>
</dbReference>
<dbReference type="Pfam" id="PF13304">
    <property type="entry name" value="AAA_21"/>
    <property type="match status" value="1"/>
</dbReference>
<dbReference type="SUPFAM" id="SSF52540">
    <property type="entry name" value="P-loop containing nucleoside triphosphate hydrolases"/>
    <property type="match status" value="1"/>
</dbReference>
<protein>
    <recommendedName>
        <fullName>ATP/GTP phosphatase</fullName>
        <shortName>ATPase/GTPase</shortName>
        <ecNumber>3.6.1.-</ecNumber>
    </recommendedName>
</protein>
<proteinExistence type="evidence at protein level"/>
<name>ATGTP_HELPY</name>
<gene>
    <name type="ordered locus">HP_1079</name>
    <name type="ordered locus">C694_05575</name>
</gene>
<sequence>MIQSVRIKNFKNFKNTKIDGFTKLNIITGQNNAGKSNLLEALYYLVGKSMHPCTNVLEIYDNIRKEPLTSESKSLMFYGLDTKEEIQIVTTLDNNQTLDLQIKFIASENQKVIESQIIPTAEQTQMSSQLNFTLKKNNEEIYNDHLNIAKVPNFPPIPNQSGYNRQFKNFDSNQLQKLLPFESAVIIPSDVVYRQAHMIQAVSKICSNNQLEEELNKHLNQFDNNIQAISFNTNNQLKLKVKDIKEKVPLSVFGDGLKKYLHIVSAFMADNAKTIYIDEVENGLHFSRMRLLLKNTIDFINNNKDGNLQVFMTTHSQEFIEILDQVIREKDFAHQTKLFCLKQDDQYVIPRTYYGENLEYYFENEENLFG</sequence>